<keyword id="KW-0007">Acetylation</keyword>
<keyword id="KW-0113">Calvin cycle</keyword>
<keyword id="KW-0120">Carbon dioxide fixation</keyword>
<keyword id="KW-0150">Chloroplast</keyword>
<keyword id="KW-1015">Disulfide bond</keyword>
<keyword id="KW-0456">Lyase</keyword>
<keyword id="KW-0460">Magnesium</keyword>
<keyword id="KW-0479">Metal-binding</keyword>
<keyword id="KW-0488">Methylation</keyword>
<keyword id="KW-0503">Monooxygenase</keyword>
<keyword id="KW-0560">Oxidoreductase</keyword>
<keyword id="KW-0601">Photorespiration</keyword>
<keyword id="KW-0602">Photosynthesis</keyword>
<keyword id="KW-0934">Plastid</keyword>
<organism>
    <name type="scientific">Eucalyptus globulus subsp. globulus</name>
    <name type="common">Tasmanian blue gum</name>
    <dbReference type="NCBI Taxonomy" id="71271"/>
    <lineage>
        <taxon>Eukaryota</taxon>
        <taxon>Viridiplantae</taxon>
        <taxon>Streptophyta</taxon>
        <taxon>Embryophyta</taxon>
        <taxon>Tracheophyta</taxon>
        <taxon>Spermatophyta</taxon>
        <taxon>Magnoliopsida</taxon>
        <taxon>eudicotyledons</taxon>
        <taxon>Gunneridae</taxon>
        <taxon>Pentapetalae</taxon>
        <taxon>rosids</taxon>
        <taxon>malvids</taxon>
        <taxon>Myrtales</taxon>
        <taxon>Myrtaceae</taxon>
        <taxon>Myrtoideae</taxon>
        <taxon>Eucalypteae</taxon>
        <taxon>Eucalyptus</taxon>
    </lineage>
</organism>
<comment type="function">
    <text evidence="1">RuBisCO catalyzes two reactions: the carboxylation of D-ribulose 1,5-bisphosphate, the primary event in carbon dioxide fixation, as well as the oxidative fragmentation of the pentose substrate in the photorespiration process. Both reactions occur simultaneously and in competition at the same active site.</text>
</comment>
<comment type="catalytic activity">
    <reaction evidence="1">
        <text>2 (2R)-3-phosphoglycerate + 2 H(+) = D-ribulose 1,5-bisphosphate + CO2 + H2O</text>
        <dbReference type="Rhea" id="RHEA:23124"/>
        <dbReference type="ChEBI" id="CHEBI:15377"/>
        <dbReference type="ChEBI" id="CHEBI:15378"/>
        <dbReference type="ChEBI" id="CHEBI:16526"/>
        <dbReference type="ChEBI" id="CHEBI:57870"/>
        <dbReference type="ChEBI" id="CHEBI:58272"/>
        <dbReference type="EC" id="4.1.1.39"/>
    </reaction>
</comment>
<comment type="catalytic activity">
    <reaction evidence="1">
        <text>D-ribulose 1,5-bisphosphate + O2 = 2-phosphoglycolate + (2R)-3-phosphoglycerate + 2 H(+)</text>
        <dbReference type="Rhea" id="RHEA:36631"/>
        <dbReference type="ChEBI" id="CHEBI:15378"/>
        <dbReference type="ChEBI" id="CHEBI:15379"/>
        <dbReference type="ChEBI" id="CHEBI:57870"/>
        <dbReference type="ChEBI" id="CHEBI:58033"/>
        <dbReference type="ChEBI" id="CHEBI:58272"/>
    </reaction>
</comment>
<comment type="cofactor">
    <cofactor evidence="1">
        <name>Mg(2+)</name>
        <dbReference type="ChEBI" id="CHEBI:18420"/>
    </cofactor>
    <text evidence="1">Binds 1 Mg(2+) ion per subunit.</text>
</comment>
<comment type="subunit">
    <text evidence="1">Heterohexadecamer of 8 large chains and 8 small chains; disulfide-linked. The disulfide link is formed within the large subunit homodimers.</text>
</comment>
<comment type="subcellular location">
    <subcellularLocation>
        <location>Plastid</location>
        <location>Chloroplast</location>
    </subcellularLocation>
</comment>
<comment type="PTM">
    <text evidence="1">The disulfide bond which can form in the large chain dimeric partners within the hexadecamer appears to be associated with oxidative stress and protein turnover.</text>
</comment>
<comment type="miscellaneous">
    <text evidence="1">The basic functional RuBisCO is composed of a large chain homodimer in a 'head-to-tail' conformation. In form I RuBisCO this homodimer is arranged in a barrel-like tetramer with the small subunits forming a tetrameric 'cap' on each end of the 'barrel'.</text>
</comment>
<comment type="similarity">
    <text evidence="1">Belongs to the RuBisCO large chain family. Type I subfamily.</text>
</comment>
<proteinExistence type="inferred from homology"/>
<sequence>MSPQTETKASVGFKAGVKDYKLTYYTPDYETKDTDILAAFRVTPQPGVPPEEAGAAVAAESSTGTWTTVWTDGLTSLDRYKGRCYHIEPVAGDENQYICYVAYPLDLFEEGSVTNMFTSIVGNVFGFKALRALRLEDLRIPPSYTKTFQGPPHGIQVERDKLNKYGRPLLGCTIKPKLGLSAKNYGRAVYECLRGGLDFTKDDENVNSQPFMRWRDRFLFCAEAIFKSQAETGEIKGHYLNATAGTCEEMMKRAVFARELGVPIVMHDYLTGGFTANTSLAHYCRDNGLLLHIHRAMHAVIDRQKNHGIHFRVLAKALRMSGGDHIHAGTVVGKLEGERDITLGFVDLLRDDFIEKDRSRGIYFTQDWVSLPGVLPVASGGIHVWHMPALTEIFGDDSVLQFGGGTLGHPWGNAPGAVANRVALEACVQARNEGRDLAREGNEIIREASKWSPELAAACEVWKEIKFEFEAMDTL</sequence>
<accession>Q49KZ0</accession>
<gene>
    <name evidence="1" type="primary">rbcL</name>
</gene>
<geneLocation type="chloroplast"/>
<reference key="1">
    <citation type="journal article" date="2005" name="DNA Res.">
        <title>Complete nucleotide sequence of the chloroplast genome from the Tasmanian blue gum, Eucalyptus globulus (Myrtaceae).</title>
        <authorList>
            <person name="Steane D.A."/>
        </authorList>
    </citation>
    <scope>NUCLEOTIDE SEQUENCE [LARGE SCALE GENOMIC DNA]</scope>
</reference>
<protein>
    <recommendedName>
        <fullName evidence="1">Ribulose bisphosphate carboxylase large chain</fullName>
        <shortName evidence="1">RuBisCO large subunit</shortName>
        <ecNumber evidence="1">4.1.1.39</ecNumber>
    </recommendedName>
</protein>
<feature type="propeptide" id="PRO_0000251420" evidence="1">
    <location>
        <begin position="1"/>
        <end position="2"/>
    </location>
</feature>
<feature type="chain" id="PRO_0000251421" description="Ribulose bisphosphate carboxylase large chain">
    <location>
        <begin position="3"/>
        <end position="475"/>
    </location>
</feature>
<feature type="active site" description="Proton acceptor" evidence="1">
    <location>
        <position position="175"/>
    </location>
</feature>
<feature type="active site" description="Proton acceptor" evidence="1">
    <location>
        <position position="294"/>
    </location>
</feature>
<feature type="binding site" description="in homodimeric partner" evidence="1">
    <location>
        <position position="123"/>
    </location>
    <ligand>
        <name>substrate</name>
    </ligand>
</feature>
<feature type="binding site" evidence="1">
    <location>
        <position position="173"/>
    </location>
    <ligand>
        <name>substrate</name>
    </ligand>
</feature>
<feature type="binding site" evidence="1">
    <location>
        <position position="177"/>
    </location>
    <ligand>
        <name>substrate</name>
    </ligand>
</feature>
<feature type="binding site" description="via carbamate group" evidence="1">
    <location>
        <position position="201"/>
    </location>
    <ligand>
        <name>Mg(2+)</name>
        <dbReference type="ChEBI" id="CHEBI:18420"/>
    </ligand>
</feature>
<feature type="binding site" evidence="1">
    <location>
        <position position="203"/>
    </location>
    <ligand>
        <name>Mg(2+)</name>
        <dbReference type="ChEBI" id="CHEBI:18420"/>
    </ligand>
</feature>
<feature type="binding site" evidence="1">
    <location>
        <position position="204"/>
    </location>
    <ligand>
        <name>Mg(2+)</name>
        <dbReference type="ChEBI" id="CHEBI:18420"/>
    </ligand>
</feature>
<feature type="binding site" evidence="1">
    <location>
        <position position="295"/>
    </location>
    <ligand>
        <name>substrate</name>
    </ligand>
</feature>
<feature type="binding site" evidence="1">
    <location>
        <position position="327"/>
    </location>
    <ligand>
        <name>substrate</name>
    </ligand>
</feature>
<feature type="binding site" evidence="1">
    <location>
        <position position="379"/>
    </location>
    <ligand>
        <name>substrate</name>
    </ligand>
</feature>
<feature type="site" description="Transition state stabilizer" evidence="1">
    <location>
        <position position="334"/>
    </location>
</feature>
<feature type="modified residue" description="N-acetylproline" evidence="1">
    <location>
        <position position="3"/>
    </location>
</feature>
<feature type="modified residue" description="N6,N6,N6-trimethyllysine" evidence="1">
    <location>
        <position position="14"/>
    </location>
</feature>
<feature type="modified residue" description="N6-carboxylysine" evidence="1">
    <location>
        <position position="201"/>
    </location>
</feature>
<feature type="disulfide bond" description="Interchain; in linked form" evidence="1">
    <location>
        <position position="247"/>
    </location>
</feature>
<dbReference type="EC" id="4.1.1.39" evidence="1"/>
<dbReference type="EMBL" id="AY780259">
    <property type="protein sequence ID" value="AAX21037.1"/>
    <property type="molecule type" value="Genomic_DNA"/>
</dbReference>
<dbReference type="RefSeq" id="YP_636307.1">
    <property type="nucleotide sequence ID" value="NC_008115.1"/>
</dbReference>
<dbReference type="SMR" id="Q49KZ0"/>
<dbReference type="GeneID" id="4108460"/>
<dbReference type="GO" id="GO:0009507">
    <property type="term" value="C:chloroplast"/>
    <property type="evidence" value="ECO:0007669"/>
    <property type="project" value="UniProtKB-SubCell"/>
</dbReference>
<dbReference type="GO" id="GO:0000287">
    <property type="term" value="F:magnesium ion binding"/>
    <property type="evidence" value="ECO:0007669"/>
    <property type="project" value="UniProtKB-UniRule"/>
</dbReference>
<dbReference type="GO" id="GO:0004497">
    <property type="term" value="F:monooxygenase activity"/>
    <property type="evidence" value="ECO:0007669"/>
    <property type="project" value="UniProtKB-KW"/>
</dbReference>
<dbReference type="GO" id="GO:0016984">
    <property type="term" value="F:ribulose-bisphosphate carboxylase activity"/>
    <property type="evidence" value="ECO:0007669"/>
    <property type="project" value="UniProtKB-UniRule"/>
</dbReference>
<dbReference type="GO" id="GO:0009853">
    <property type="term" value="P:photorespiration"/>
    <property type="evidence" value="ECO:0007669"/>
    <property type="project" value="UniProtKB-KW"/>
</dbReference>
<dbReference type="GO" id="GO:0019253">
    <property type="term" value="P:reductive pentose-phosphate cycle"/>
    <property type="evidence" value="ECO:0007669"/>
    <property type="project" value="UniProtKB-UniRule"/>
</dbReference>
<dbReference type="CDD" id="cd08212">
    <property type="entry name" value="RuBisCO_large_I"/>
    <property type="match status" value="1"/>
</dbReference>
<dbReference type="FunFam" id="3.20.20.110:FF:000001">
    <property type="entry name" value="Ribulose bisphosphate carboxylase large chain"/>
    <property type="match status" value="1"/>
</dbReference>
<dbReference type="FunFam" id="3.30.70.150:FF:000001">
    <property type="entry name" value="Ribulose bisphosphate carboxylase large chain"/>
    <property type="match status" value="1"/>
</dbReference>
<dbReference type="Gene3D" id="3.20.20.110">
    <property type="entry name" value="Ribulose bisphosphate carboxylase, large subunit, C-terminal domain"/>
    <property type="match status" value="1"/>
</dbReference>
<dbReference type="Gene3D" id="3.30.70.150">
    <property type="entry name" value="RuBisCO large subunit, N-terminal domain"/>
    <property type="match status" value="1"/>
</dbReference>
<dbReference type="HAMAP" id="MF_01338">
    <property type="entry name" value="RuBisCO_L_type1"/>
    <property type="match status" value="1"/>
</dbReference>
<dbReference type="InterPro" id="IPR033966">
    <property type="entry name" value="RuBisCO"/>
</dbReference>
<dbReference type="InterPro" id="IPR020878">
    <property type="entry name" value="RuBisCo_large_chain_AS"/>
</dbReference>
<dbReference type="InterPro" id="IPR000685">
    <property type="entry name" value="RuBisCO_lsu_C"/>
</dbReference>
<dbReference type="InterPro" id="IPR036376">
    <property type="entry name" value="RuBisCO_lsu_C_sf"/>
</dbReference>
<dbReference type="InterPro" id="IPR017443">
    <property type="entry name" value="RuBisCO_lsu_fd_N"/>
</dbReference>
<dbReference type="InterPro" id="IPR036422">
    <property type="entry name" value="RuBisCO_lsu_N_sf"/>
</dbReference>
<dbReference type="InterPro" id="IPR020888">
    <property type="entry name" value="RuBisCO_lsuI"/>
</dbReference>
<dbReference type="NCBIfam" id="NF003252">
    <property type="entry name" value="PRK04208.1"/>
    <property type="match status" value="1"/>
</dbReference>
<dbReference type="PANTHER" id="PTHR42704">
    <property type="entry name" value="RIBULOSE BISPHOSPHATE CARBOXYLASE"/>
    <property type="match status" value="1"/>
</dbReference>
<dbReference type="PANTHER" id="PTHR42704:SF15">
    <property type="entry name" value="RIBULOSE BISPHOSPHATE CARBOXYLASE LARGE CHAIN"/>
    <property type="match status" value="1"/>
</dbReference>
<dbReference type="Pfam" id="PF00016">
    <property type="entry name" value="RuBisCO_large"/>
    <property type="match status" value="1"/>
</dbReference>
<dbReference type="Pfam" id="PF02788">
    <property type="entry name" value="RuBisCO_large_N"/>
    <property type="match status" value="1"/>
</dbReference>
<dbReference type="SFLD" id="SFLDG01052">
    <property type="entry name" value="RuBisCO"/>
    <property type="match status" value="1"/>
</dbReference>
<dbReference type="SFLD" id="SFLDS00014">
    <property type="entry name" value="RuBisCO"/>
    <property type="match status" value="1"/>
</dbReference>
<dbReference type="SFLD" id="SFLDG00301">
    <property type="entry name" value="RuBisCO-like_proteins"/>
    <property type="match status" value="1"/>
</dbReference>
<dbReference type="SUPFAM" id="SSF51649">
    <property type="entry name" value="RuBisCo, C-terminal domain"/>
    <property type="match status" value="1"/>
</dbReference>
<dbReference type="SUPFAM" id="SSF54966">
    <property type="entry name" value="RuBisCO, large subunit, small (N-terminal) domain"/>
    <property type="match status" value="1"/>
</dbReference>
<dbReference type="PROSITE" id="PS00157">
    <property type="entry name" value="RUBISCO_LARGE"/>
    <property type="match status" value="1"/>
</dbReference>
<evidence type="ECO:0000255" key="1">
    <source>
        <dbReference type="HAMAP-Rule" id="MF_01338"/>
    </source>
</evidence>
<name>RBL_EUCGG</name>